<accession>B2RKU2</accession>
<proteinExistence type="inferred from homology"/>
<reference key="1">
    <citation type="journal article" date="2008" name="DNA Res.">
        <title>Determination of the genome sequence of Porphyromonas gingivalis strain ATCC 33277 and genomic comparison with strain W83 revealed extensive genome rearrangements in P. gingivalis.</title>
        <authorList>
            <person name="Naito M."/>
            <person name="Hirakawa H."/>
            <person name="Yamashita A."/>
            <person name="Ohara N."/>
            <person name="Shoji M."/>
            <person name="Yukitake H."/>
            <person name="Nakayama K."/>
            <person name="Toh H."/>
            <person name="Yoshimura F."/>
            <person name="Kuhara S."/>
            <person name="Hattori M."/>
            <person name="Hayashi T."/>
            <person name="Nakayama K."/>
        </authorList>
    </citation>
    <scope>NUCLEOTIDE SEQUENCE [LARGE SCALE GENOMIC DNA]</scope>
    <source>
        <strain>ATCC 33277 / DSM 20709 / CIP 103683 / JCM 12257 / NCTC 11834 / 2561</strain>
    </source>
</reference>
<name>LIPA_PORG3</name>
<comment type="function">
    <text evidence="1">Catalyzes the radical-mediated insertion of two sulfur atoms into the C-6 and C-8 positions of the octanoyl moiety bound to the lipoyl domains of lipoate-dependent enzymes, thereby converting the octanoylated domains into lipoylated derivatives.</text>
</comment>
<comment type="catalytic activity">
    <reaction evidence="1">
        <text>[[Fe-S] cluster scaffold protein carrying a second [4Fe-4S](2+) cluster] + N(6)-octanoyl-L-lysyl-[protein] + 2 oxidized [2Fe-2S]-[ferredoxin] + 2 S-adenosyl-L-methionine + 4 H(+) = [[Fe-S] cluster scaffold protein] + N(6)-[(R)-dihydrolipoyl]-L-lysyl-[protein] + 4 Fe(3+) + 2 hydrogen sulfide + 2 5'-deoxyadenosine + 2 L-methionine + 2 reduced [2Fe-2S]-[ferredoxin]</text>
        <dbReference type="Rhea" id="RHEA:16585"/>
        <dbReference type="Rhea" id="RHEA-COMP:9928"/>
        <dbReference type="Rhea" id="RHEA-COMP:10000"/>
        <dbReference type="Rhea" id="RHEA-COMP:10001"/>
        <dbReference type="Rhea" id="RHEA-COMP:10475"/>
        <dbReference type="Rhea" id="RHEA-COMP:14568"/>
        <dbReference type="Rhea" id="RHEA-COMP:14569"/>
        <dbReference type="ChEBI" id="CHEBI:15378"/>
        <dbReference type="ChEBI" id="CHEBI:17319"/>
        <dbReference type="ChEBI" id="CHEBI:29034"/>
        <dbReference type="ChEBI" id="CHEBI:29919"/>
        <dbReference type="ChEBI" id="CHEBI:33722"/>
        <dbReference type="ChEBI" id="CHEBI:33737"/>
        <dbReference type="ChEBI" id="CHEBI:33738"/>
        <dbReference type="ChEBI" id="CHEBI:57844"/>
        <dbReference type="ChEBI" id="CHEBI:59789"/>
        <dbReference type="ChEBI" id="CHEBI:78809"/>
        <dbReference type="ChEBI" id="CHEBI:83100"/>
        <dbReference type="EC" id="2.8.1.8"/>
    </reaction>
</comment>
<comment type="cofactor">
    <cofactor evidence="1">
        <name>[4Fe-4S] cluster</name>
        <dbReference type="ChEBI" id="CHEBI:49883"/>
    </cofactor>
    <text evidence="1">Binds 2 [4Fe-4S] clusters per subunit. One cluster is coordinated with 3 cysteines and an exchangeable S-adenosyl-L-methionine.</text>
</comment>
<comment type="pathway">
    <text evidence="1">Protein modification; protein lipoylation via endogenous pathway; protein N(6)-(lipoyl)lysine from octanoyl-[acyl-carrier-protein]: step 2/2.</text>
</comment>
<comment type="subcellular location">
    <subcellularLocation>
        <location evidence="1">Cytoplasm</location>
    </subcellularLocation>
</comment>
<comment type="similarity">
    <text evidence="1">Belongs to the radical SAM superfamily. Lipoyl synthase family.</text>
</comment>
<gene>
    <name evidence="1" type="primary">lipA</name>
    <name type="ordered locus">PGN_1468</name>
</gene>
<keyword id="KW-0004">4Fe-4S</keyword>
<keyword id="KW-0963">Cytoplasm</keyword>
<keyword id="KW-0408">Iron</keyword>
<keyword id="KW-0411">Iron-sulfur</keyword>
<keyword id="KW-0479">Metal-binding</keyword>
<keyword id="KW-0949">S-adenosyl-L-methionine</keyword>
<keyword id="KW-0808">Transferase</keyword>
<dbReference type="EC" id="2.8.1.8" evidence="1"/>
<dbReference type="EMBL" id="AP009380">
    <property type="protein sequence ID" value="BAG33987.1"/>
    <property type="molecule type" value="Genomic_DNA"/>
</dbReference>
<dbReference type="RefSeq" id="WP_012458293.1">
    <property type="nucleotide sequence ID" value="NZ_CP025930.1"/>
</dbReference>
<dbReference type="SMR" id="B2RKU2"/>
<dbReference type="GeneID" id="29256650"/>
<dbReference type="KEGG" id="pgn:PGN_1468"/>
<dbReference type="eggNOG" id="COG0320">
    <property type="taxonomic scope" value="Bacteria"/>
</dbReference>
<dbReference type="HOGENOM" id="CLU_033144_2_1_10"/>
<dbReference type="OrthoDB" id="9787898at2"/>
<dbReference type="BioCyc" id="PGIN431947:G1G2V-1669-MONOMER"/>
<dbReference type="UniPathway" id="UPA00538">
    <property type="reaction ID" value="UER00593"/>
</dbReference>
<dbReference type="Proteomes" id="UP000008842">
    <property type="component" value="Chromosome"/>
</dbReference>
<dbReference type="GO" id="GO:0005737">
    <property type="term" value="C:cytoplasm"/>
    <property type="evidence" value="ECO:0007669"/>
    <property type="project" value="UniProtKB-SubCell"/>
</dbReference>
<dbReference type="GO" id="GO:0051539">
    <property type="term" value="F:4 iron, 4 sulfur cluster binding"/>
    <property type="evidence" value="ECO:0007669"/>
    <property type="project" value="UniProtKB-UniRule"/>
</dbReference>
<dbReference type="GO" id="GO:0016992">
    <property type="term" value="F:lipoate synthase activity"/>
    <property type="evidence" value="ECO:0007669"/>
    <property type="project" value="UniProtKB-UniRule"/>
</dbReference>
<dbReference type="GO" id="GO:0046872">
    <property type="term" value="F:metal ion binding"/>
    <property type="evidence" value="ECO:0007669"/>
    <property type="project" value="UniProtKB-KW"/>
</dbReference>
<dbReference type="CDD" id="cd01335">
    <property type="entry name" value="Radical_SAM"/>
    <property type="match status" value="1"/>
</dbReference>
<dbReference type="FunFam" id="3.20.20.70:FF:000040">
    <property type="entry name" value="Lipoyl synthase"/>
    <property type="match status" value="1"/>
</dbReference>
<dbReference type="Gene3D" id="3.20.20.70">
    <property type="entry name" value="Aldolase class I"/>
    <property type="match status" value="1"/>
</dbReference>
<dbReference type="HAMAP" id="MF_00206">
    <property type="entry name" value="Lipoyl_synth"/>
    <property type="match status" value="1"/>
</dbReference>
<dbReference type="InterPro" id="IPR013785">
    <property type="entry name" value="Aldolase_TIM"/>
</dbReference>
<dbReference type="InterPro" id="IPR006638">
    <property type="entry name" value="Elp3/MiaA/NifB-like_rSAM"/>
</dbReference>
<dbReference type="InterPro" id="IPR003698">
    <property type="entry name" value="Lipoyl_synth"/>
</dbReference>
<dbReference type="InterPro" id="IPR007197">
    <property type="entry name" value="rSAM"/>
</dbReference>
<dbReference type="NCBIfam" id="TIGR00510">
    <property type="entry name" value="lipA"/>
    <property type="match status" value="1"/>
</dbReference>
<dbReference type="NCBIfam" id="NF004019">
    <property type="entry name" value="PRK05481.1"/>
    <property type="match status" value="1"/>
</dbReference>
<dbReference type="NCBIfam" id="NF009544">
    <property type="entry name" value="PRK12928.1"/>
    <property type="match status" value="1"/>
</dbReference>
<dbReference type="PANTHER" id="PTHR10949">
    <property type="entry name" value="LIPOYL SYNTHASE"/>
    <property type="match status" value="1"/>
</dbReference>
<dbReference type="PANTHER" id="PTHR10949:SF0">
    <property type="entry name" value="LIPOYL SYNTHASE, MITOCHONDRIAL"/>
    <property type="match status" value="1"/>
</dbReference>
<dbReference type="Pfam" id="PF04055">
    <property type="entry name" value="Radical_SAM"/>
    <property type="match status" value="1"/>
</dbReference>
<dbReference type="PIRSF" id="PIRSF005963">
    <property type="entry name" value="Lipoyl_synth"/>
    <property type="match status" value="1"/>
</dbReference>
<dbReference type="SFLD" id="SFLDF00271">
    <property type="entry name" value="lipoyl_synthase"/>
    <property type="match status" value="1"/>
</dbReference>
<dbReference type="SFLD" id="SFLDG01058">
    <property type="entry name" value="lipoyl_synthase_like"/>
    <property type="match status" value="1"/>
</dbReference>
<dbReference type="SMART" id="SM00729">
    <property type="entry name" value="Elp3"/>
    <property type="match status" value="1"/>
</dbReference>
<dbReference type="SUPFAM" id="SSF102114">
    <property type="entry name" value="Radical SAM enzymes"/>
    <property type="match status" value="1"/>
</dbReference>
<dbReference type="PROSITE" id="PS51918">
    <property type="entry name" value="RADICAL_SAM"/>
    <property type="match status" value="1"/>
</dbReference>
<sequence>MAQHVKKPEWLKIRLGGNEKFTETKSIVEGHCLHTICTSGKCPNMGECWSRGTATFMIGGDICTRACRFCNTLTGRPKPLNEAEPTHVALSIKLMGLNHAVVTSVDRDDLPDYGATHWVKTIQEIRRINSGVTLEVLIPDFKGRMDLVDMIIEASPDVISHNLETVRRLTPSVRSVATYDTSLAVLRHIAQSGKMPAKTGMMLGLGETEEEILELMDDALAAGVSVITIGQYLQPSRKNLPVVEYITPEQFEHLRLVGIEKGFRTIESAPLVRSSYHAERHL</sequence>
<protein>
    <recommendedName>
        <fullName evidence="1">Lipoyl synthase</fullName>
        <ecNumber evidence="1">2.8.1.8</ecNumber>
    </recommendedName>
    <alternativeName>
        <fullName evidence="1">Lip-syn</fullName>
        <shortName evidence="1">LS</shortName>
    </alternativeName>
    <alternativeName>
        <fullName evidence="1">Lipoate synthase</fullName>
    </alternativeName>
    <alternativeName>
        <fullName evidence="1">Lipoic acid synthase</fullName>
    </alternativeName>
    <alternativeName>
        <fullName evidence="1">Sulfur insertion protein LipA</fullName>
    </alternativeName>
</protein>
<feature type="chain" id="PRO_1000099620" description="Lipoyl synthase">
    <location>
        <begin position="1"/>
        <end position="282"/>
    </location>
</feature>
<feature type="domain" description="Radical SAM core" evidence="2">
    <location>
        <begin position="49"/>
        <end position="264"/>
    </location>
</feature>
<feature type="binding site" evidence="1">
    <location>
        <position position="37"/>
    </location>
    <ligand>
        <name>[4Fe-4S] cluster</name>
        <dbReference type="ChEBI" id="CHEBI:49883"/>
        <label>1</label>
    </ligand>
</feature>
<feature type="binding site" evidence="1">
    <location>
        <position position="42"/>
    </location>
    <ligand>
        <name>[4Fe-4S] cluster</name>
        <dbReference type="ChEBI" id="CHEBI:49883"/>
        <label>1</label>
    </ligand>
</feature>
<feature type="binding site" evidence="1">
    <location>
        <position position="48"/>
    </location>
    <ligand>
        <name>[4Fe-4S] cluster</name>
        <dbReference type="ChEBI" id="CHEBI:49883"/>
        <label>1</label>
    </ligand>
</feature>
<feature type="binding site" evidence="1">
    <location>
        <position position="63"/>
    </location>
    <ligand>
        <name>[4Fe-4S] cluster</name>
        <dbReference type="ChEBI" id="CHEBI:49883"/>
        <label>2</label>
        <note>4Fe-4S-S-AdoMet</note>
    </ligand>
</feature>
<feature type="binding site" evidence="1">
    <location>
        <position position="67"/>
    </location>
    <ligand>
        <name>[4Fe-4S] cluster</name>
        <dbReference type="ChEBI" id="CHEBI:49883"/>
        <label>2</label>
        <note>4Fe-4S-S-AdoMet</note>
    </ligand>
</feature>
<feature type="binding site" evidence="1">
    <location>
        <position position="70"/>
    </location>
    <ligand>
        <name>[4Fe-4S] cluster</name>
        <dbReference type="ChEBI" id="CHEBI:49883"/>
        <label>2</label>
        <note>4Fe-4S-S-AdoMet</note>
    </ligand>
</feature>
<feature type="binding site" evidence="1">
    <location>
        <position position="275"/>
    </location>
    <ligand>
        <name>[4Fe-4S] cluster</name>
        <dbReference type="ChEBI" id="CHEBI:49883"/>
        <label>1</label>
    </ligand>
</feature>
<organism>
    <name type="scientific">Porphyromonas gingivalis (strain ATCC 33277 / DSM 20709 / CIP 103683 / JCM 12257 / NCTC 11834 / 2561)</name>
    <dbReference type="NCBI Taxonomy" id="431947"/>
    <lineage>
        <taxon>Bacteria</taxon>
        <taxon>Pseudomonadati</taxon>
        <taxon>Bacteroidota</taxon>
        <taxon>Bacteroidia</taxon>
        <taxon>Bacteroidales</taxon>
        <taxon>Porphyromonadaceae</taxon>
        <taxon>Porphyromonas</taxon>
    </lineage>
</organism>
<evidence type="ECO:0000255" key="1">
    <source>
        <dbReference type="HAMAP-Rule" id="MF_00206"/>
    </source>
</evidence>
<evidence type="ECO:0000255" key="2">
    <source>
        <dbReference type="PROSITE-ProRule" id="PRU01266"/>
    </source>
</evidence>